<gene>
    <name evidence="1" type="primary">rpmH</name>
    <name type="ordered locus">Cvib_1774</name>
</gene>
<accession>A4SH23</accession>
<keyword id="KW-0687">Ribonucleoprotein</keyword>
<keyword id="KW-0689">Ribosomal protein</keyword>
<protein>
    <recommendedName>
        <fullName evidence="1">Large ribosomal subunit protein bL34</fullName>
    </recommendedName>
    <alternativeName>
        <fullName evidence="3">50S ribosomal protein L34</fullName>
    </alternativeName>
</protein>
<sequence>MKRTFQPSNRKRRNKHGFRLRMSTKNGRRIINARRAKGRHSLSVSSDMGTAGR</sequence>
<name>RL34_CHLPM</name>
<evidence type="ECO:0000255" key="1">
    <source>
        <dbReference type="HAMAP-Rule" id="MF_00391"/>
    </source>
</evidence>
<evidence type="ECO:0000256" key="2">
    <source>
        <dbReference type="SAM" id="MobiDB-lite"/>
    </source>
</evidence>
<evidence type="ECO:0000305" key="3"/>
<comment type="similarity">
    <text evidence="1">Belongs to the bacterial ribosomal protein bL34 family.</text>
</comment>
<reference key="1">
    <citation type="submission" date="2007-03" db="EMBL/GenBank/DDBJ databases">
        <title>Complete sequence of Prosthecochloris vibrioformis DSM 265.</title>
        <authorList>
            <consortium name="US DOE Joint Genome Institute"/>
            <person name="Copeland A."/>
            <person name="Lucas S."/>
            <person name="Lapidus A."/>
            <person name="Barry K."/>
            <person name="Detter J.C."/>
            <person name="Glavina del Rio T."/>
            <person name="Hammon N."/>
            <person name="Israni S."/>
            <person name="Pitluck S."/>
            <person name="Schmutz J."/>
            <person name="Larimer F."/>
            <person name="Land M."/>
            <person name="Hauser L."/>
            <person name="Mikhailova N."/>
            <person name="Li T."/>
            <person name="Overmann J."/>
            <person name="Schuster S.C."/>
            <person name="Bryant D.A."/>
            <person name="Richardson P."/>
        </authorList>
    </citation>
    <scope>NUCLEOTIDE SEQUENCE [LARGE SCALE GENOMIC DNA]</scope>
    <source>
        <strain>DSM 265 / 1930</strain>
    </source>
</reference>
<dbReference type="EMBL" id="CP000607">
    <property type="protein sequence ID" value="ABP37782.1"/>
    <property type="molecule type" value="Genomic_DNA"/>
</dbReference>
<dbReference type="SMR" id="A4SH23"/>
<dbReference type="STRING" id="290318.Cvib_1774"/>
<dbReference type="KEGG" id="pvi:Cvib_1774"/>
<dbReference type="eggNOG" id="COG0230">
    <property type="taxonomic scope" value="Bacteria"/>
</dbReference>
<dbReference type="HOGENOM" id="CLU_129938_2_0_10"/>
<dbReference type="OrthoDB" id="9804164at2"/>
<dbReference type="GO" id="GO:1990904">
    <property type="term" value="C:ribonucleoprotein complex"/>
    <property type="evidence" value="ECO:0007669"/>
    <property type="project" value="UniProtKB-KW"/>
</dbReference>
<dbReference type="GO" id="GO:0005840">
    <property type="term" value="C:ribosome"/>
    <property type="evidence" value="ECO:0007669"/>
    <property type="project" value="UniProtKB-KW"/>
</dbReference>
<dbReference type="GO" id="GO:0003735">
    <property type="term" value="F:structural constituent of ribosome"/>
    <property type="evidence" value="ECO:0007669"/>
    <property type="project" value="InterPro"/>
</dbReference>
<dbReference type="GO" id="GO:0006412">
    <property type="term" value="P:translation"/>
    <property type="evidence" value="ECO:0007669"/>
    <property type="project" value="UniProtKB-UniRule"/>
</dbReference>
<dbReference type="FunFam" id="1.10.287.3980:FF:000001">
    <property type="entry name" value="Mitochondrial ribosomal protein L34"/>
    <property type="match status" value="1"/>
</dbReference>
<dbReference type="Gene3D" id="1.10.287.3980">
    <property type="match status" value="1"/>
</dbReference>
<dbReference type="HAMAP" id="MF_00391">
    <property type="entry name" value="Ribosomal_bL34"/>
    <property type="match status" value="1"/>
</dbReference>
<dbReference type="InterPro" id="IPR000271">
    <property type="entry name" value="Ribosomal_bL34"/>
</dbReference>
<dbReference type="InterPro" id="IPR020939">
    <property type="entry name" value="Ribosomal_bL34_CS"/>
</dbReference>
<dbReference type="NCBIfam" id="TIGR01030">
    <property type="entry name" value="rpmH_bact"/>
    <property type="match status" value="1"/>
</dbReference>
<dbReference type="PANTHER" id="PTHR14503:SF4">
    <property type="entry name" value="LARGE RIBOSOMAL SUBUNIT PROTEIN BL34M"/>
    <property type="match status" value="1"/>
</dbReference>
<dbReference type="PANTHER" id="PTHR14503">
    <property type="entry name" value="MITOCHONDRIAL RIBOSOMAL PROTEIN 34 FAMILY MEMBER"/>
    <property type="match status" value="1"/>
</dbReference>
<dbReference type="Pfam" id="PF00468">
    <property type="entry name" value="Ribosomal_L34"/>
    <property type="match status" value="1"/>
</dbReference>
<dbReference type="PROSITE" id="PS00784">
    <property type="entry name" value="RIBOSOMAL_L34"/>
    <property type="match status" value="1"/>
</dbReference>
<organism>
    <name type="scientific">Chlorobium phaeovibrioides (strain DSM 265 / 1930)</name>
    <name type="common">Prosthecochloris vibrioformis (strain DSM 265)</name>
    <dbReference type="NCBI Taxonomy" id="290318"/>
    <lineage>
        <taxon>Bacteria</taxon>
        <taxon>Pseudomonadati</taxon>
        <taxon>Chlorobiota</taxon>
        <taxon>Chlorobiia</taxon>
        <taxon>Chlorobiales</taxon>
        <taxon>Chlorobiaceae</taxon>
        <taxon>Chlorobium/Pelodictyon group</taxon>
        <taxon>Chlorobium</taxon>
    </lineage>
</organism>
<feature type="chain" id="PRO_1000080260" description="Large ribosomal subunit protein bL34">
    <location>
        <begin position="1"/>
        <end position="53"/>
    </location>
</feature>
<feature type="region of interest" description="Disordered" evidence="2">
    <location>
        <begin position="1"/>
        <end position="20"/>
    </location>
</feature>
<feature type="compositionally biased region" description="Basic residues" evidence="2">
    <location>
        <begin position="1"/>
        <end position="19"/>
    </location>
</feature>
<proteinExistence type="inferred from homology"/>